<feature type="chain" id="PRO_0000339201" description="Suppressor of tumorigenicity 7 protein">
    <location>
        <begin position="1"/>
        <end position="585"/>
    </location>
</feature>
<feature type="transmembrane region" description="Helical" evidence="2">
    <location>
        <begin position="15"/>
        <end position="35"/>
    </location>
</feature>
<feature type="transmembrane region" description="Helical" evidence="2">
    <location>
        <begin position="62"/>
        <end position="82"/>
    </location>
</feature>
<feature type="transmembrane region" description="Helical" evidence="2">
    <location>
        <begin position="512"/>
        <end position="532"/>
    </location>
</feature>
<feature type="modified residue" description="Phosphoserine" evidence="1">
    <location>
        <position position="386"/>
    </location>
</feature>
<feature type="glycosylation site" description="N-linked (GlcNAc...) asparagine" evidence="2">
    <location>
        <position position="47"/>
    </location>
</feature>
<reference key="1">
    <citation type="submission" date="2005-11" db="EMBL/GenBank/DDBJ databases">
        <title>NISC comparative sequencing initiative.</title>
        <authorList>
            <person name="Antonellis A."/>
            <person name="Ayele K."/>
            <person name="Benjamin B."/>
            <person name="Blakesley R.W."/>
            <person name="Boakye A."/>
            <person name="Bouffard G.G."/>
            <person name="Brinkley C."/>
            <person name="Brooks S."/>
            <person name="Chu G."/>
            <person name="Coleman H."/>
            <person name="Engle J."/>
            <person name="Gestole M."/>
            <person name="Greene A."/>
            <person name="Guan X."/>
            <person name="Gupta J."/>
            <person name="Haghighi P."/>
            <person name="Han J."/>
            <person name="Hansen N."/>
            <person name="Ho S.-L."/>
            <person name="Hu P."/>
            <person name="Hunter G."/>
            <person name="Hurle B."/>
            <person name="Idol J.R."/>
            <person name="Kwong P."/>
            <person name="Laric P."/>
            <person name="Larson S."/>
            <person name="Lee-Lin S.-Q."/>
            <person name="Legaspi R."/>
            <person name="Madden M."/>
            <person name="Maduro Q.L."/>
            <person name="Maduro V.B."/>
            <person name="Margulies E.H."/>
            <person name="Masiello C."/>
            <person name="Maskeri B."/>
            <person name="McDowell J."/>
            <person name="Mojidi H.A."/>
            <person name="Mullikin J.C."/>
            <person name="Oestreicher J.S."/>
            <person name="Park M."/>
            <person name="Portnoy M.E."/>
            <person name="Prasad A."/>
            <person name="Puri O."/>
            <person name="Reddix-Dugue N."/>
            <person name="Schandler K."/>
            <person name="Schueler M.G."/>
            <person name="Sison C."/>
            <person name="Stantripop S."/>
            <person name="Stephen E."/>
            <person name="Taye A."/>
            <person name="Thomas J.W."/>
            <person name="Thomas P.J."/>
            <person name="Tsipouri V."/>
            <person name="Ung L."/>
            <person name="Vogt J.L."/>
            <person name="Wetherby K.D."/>
            <person name="Young A."/>
            <person name="Green E.D."/>
        </authorList>
    </citation>
    <scope>NUCLEOTIDE SEQUENCE [LARGE SCALE GENOMIC DNA]</scope>
</reference>
<accession>Q2QLA6</accession>
<evidence type="ECO:0000250" key="1">
    <source>
        <dbReference type="UniProtKB" id="Q9NRC1"/>
    </source>
</evidence>
<evidence type="ECO:0000255" key="2"/>
<evidence type="ECO:0000305" key="3"/>
<sequence length="585" mass="67152">MAEAGTGFLEQLKSCIVWSWTYLWTVWFFIVLFLVYILRVPLKINDNLSTVSMFLNTLTPKFYVALTGTSSLISGLILIFEWWYFRKYGTSFIEQVSVSHLRPLLGGVDNNSSNNSNSSNGDSDSNRQSVSECKVWRNPLNLFRGAEYNRYTWVTGREPLTYYDMNLSAQDHQTFFTCDSDHLRPADAIMQKAWRERNPQARISAAHEALEINEIRSRVEVPLIASSTIWEIKLLPKCATAYILLAEEEATTIAEAEKLFKQALKAGDGCYRRSQQLQHHGSQYEAQHRRDTNVLVYIKRRLAMCARRLGRTREAVKMMRDLMKEFPLLSMFNIHENLLEALLELQAYADVQAVLAKYDDISLPKSATICYTAALLKARAVSDKFSPEAASRRGLSTAEMNAVEAIHRAVEFNPHVPKYLLEMKSLILPPEHILKRGDSEAIAYAFFHLAHWKRVEGALNLLHCTWEGTFRMIPYPLEKGHLFYPYPICTETADRELLPSFHEVSVYPKKELPFFILFTAGLCSFTAMLALLTHQFPELMGVFAKAMIDIFCSAEFRDWNCKSIFMRVEDELEIPPAPQSQHFQN</sequence>
<organism>
    <name type="scientific">Equus caballus</name>
    <name type="common">Horse</name>
    <dbReference type="NCBI Taxonomy" id="9796"/>
    <lineage>
        <taxon>Eukaryota</taxon>
        <taxon>Metazoa</taxon>
        <taxon>Chordata</taxon>
        <taxon>Craniata</taxon>
        <taxon>Vertebrata</taxon>
        <taxon>Euteleostomi</taxon>
        <taxon>Mammalia</taxon>
        <taxon>Eutheria</taxon>
        <taxon>Laurasiatheria</taxon>
        <taxon>Perissodactyla</taxon>
        <taxon>Equidae</taxon>
        <taxon>Equus</taxon>
    </lineage>
</organism>
<keyword id="KW-0325">Glycoprotein</keyword>
<keyword id="KW-0472">Membrane</keyword>
<keyword id="KW-0597">Phosphoprotein</keyword>
<keyword id="KW-1185">Reference proteome</keyword>
<keyword id="KW-0812">Transmembrane</keyword>
<keyword id="KW-1133">Transmembrane helix</keyword>
<comment type="subcellular location">
    <subcellularLocation>
        <location evidence="3">Membrane</location>
        <topology evidence="3">Multi-pass membrane protein</topology>
    </subcellularLocation>
</comment>
<comment type="similarity">
    <text evidence="3">Belongs to the ST7 family.</text>
</comment>
<protein>
    <recommendedName>
        <fullName>Suppressor of tumorigenicity 7 protein</fullName>
    </recommendedName>
</protein>
<proteinExistence type="inferred from homology"/>
<gene>
    <name type="primary">ST7</name>
</gene>
<name>ST7_HORSE</name>
<dbReference type="EMBL" id="DP000020">
    <property type="protein sequence ID" value="ABB89803.1"/>
    <property type="molecule type" value="Genomic_DNA"/>
</dbReference>
<dbReference type="RefSeq" id="XP_070120308.1">
    <property type="nucleotide sequence ID" value="XM_070264207.1"/>
</dbReference>
<dbReference type="FunCoup" id="Q2QLA6">
    <property type="interactions" value="315"/>
</dbReference>
<dbReference type="STRING" id="9796.ENSECAP00000045094"/>
<dbReference type="GlyCosmos" id="Q2QLA6">
    <property type="glycosylation" value="1 site, No reported glycans"/>
</dbReference>
<dbReference type="PaxDb" id="9796-ENSECAP00000045094"/>
<dbReference type="GeneID" id="100056055"/>
<dbReference type="InParanoid" id="Q2QLA6"/>
<dbReference type="OMA" id="DRCATAY"/>
<dbReference type="Proteomes" id="UP000002281">
    <property type="component" value="Chromosome 4"/>
</dbReference>
<dbReference type="Bgee" id="ENSECAG00000008375">
    <property type="expression patterns" value="Expressed in cerebellum and 23 other cell types or tissues"/>
</dbReference>
<dbReference type="GO" id="GO:0016020">
    <property type="term" value="C:membrane"/>
    <property type="evidence" value="ECO:0007669"/>
    <property type="project" value="UniProtKB-SubCell"/>
</dbReference>
<dbReference type="CDD" id="cd11557">
    <property type="entry name" value="ST7"/>
    <property type="match status" value="1"/>
</dbReference>
<dbReference type="InterPro" id="IPR007311">
    <property type="entry name" value="ST7"/>
</dbReference>
<dbReference type="PANTHER" id="PTHR12745">
    <property type="entry name" value="SUPPRESSION OF TUMORIGENICITY 7"/>
    <property type="match status" value="1"/>
</dbReference>
<dbReference type="PANTHER" id="PTHR12745:SF10">
    <property type="entry name" value="SUPPRESSOR OF TUMORIGENICITY 7 PROTEIN"/>
    <property type="match status" value="1"/>
</dbReference>
<dbReference type="Pfam" id="PF04184">
    <property type="entry name" value="ST7"/>
    <property type="match status" value="1"/>
</dbReference>